<keyword id="KW-0687">Ribonucleoprotein</keyword>
<keyword id="KW-0689">Ribosomal protein</keyword>
<keyword id="KW-0694">RNA-binding</keyword>
<keyword id="KW-0699">rRNA-binding</keyword>
<comment type="function">
    <text evidence="1">This protein binds specifically to 23S rRNA; its binding is stimulated by other ribosomal proteins, e.g. L4, L17, and L20. It is important during the early stages of 50S assembly. It makes multiple contacts with different domains of the 23S rRNA in the assembled 50S subunit and ribosome (By similarity).</text>
</comment>
<comment type="function">
    <text evidence="1">The globular domain of the protein is located near the polypeptide exit tunnel on the outside of the subunit, while an extended beta-hairpin is found that lines the wall of the exit tunnel in the center of the 70S ribosome.</text>
</comment>
<comment type="subunit">
    <text evidence="1">Part of the 50S ribosomal subunit.</text>
</comment>
<comment type="similarity">
    <text evidence="1">Belongs to the universal ribosomal protein uL22 family.</text>
</comment>
<organism>
    <name type="scientific">Streptococcus pyogenes</name>
    <dbReference type="NCBI Taxonomy" id="1314"/>
    <lineage>
        <taxon>Bacteria</taxon>
        <taxon>Bacillati</taxon>
        <taxon>Bacillota</taxon>
        <taxon>Bacilli</taxon>
        <taxon>Lactobacillales</taxon>
        <taxon>Streptococcaceae</taxon>
        <taxon>Streptococcus</taxon>
    </lineage>
</organism>
<sequence length="114" mass="12431">MAEITSAKAMARTVRVSPRKTRLVLDLIRGKKVADAIAILKFTPNKAARVIEKTLNSAIANAENNFGLEKANLVVSETFANEGPTMKRFRPRAKGSASPINKRTTHVTVVVSEK</sequence>
<name>RL22_STRPY</name>
<feature type="chain" id="PRO_0000125238" description="Large ribosomal subunit protein uL22">
    <location>
        <begin position="1"/>
        <end position="114"/>
    </location>
</feature>
<proteinExistence type="inferred from homology"/>
<protein>
    <recommendedName>
        <fullName evidence="1">Large ribosomal subunit protein uL22</fullName>
    </recommendedName>
    <alternativeName>
        <fullName evidence="2">50S ribosomal protein L22</fullName>
    </alternativeName>
</protein>
<dbReference type="EMBL" id="AJ544684">
    <property type="protein sequence ID" value="CAD67590.1"/>
    <property type="molecule type" value="Genomic_DNA"/>
</dbReference>
<dbReference type="RefSeq" id="WP_002986651.1">
    <property type="nucleotide sequence ID" value="NZ_WXZK01000002.1"/>
</dbReference>
<dbReference type="SMR" id="P0C0D3"/>
<dbReference type="STRING" id="1314.SD89_00400"/>
<dbReference type="GeneID" id="83703909"/>
<dbReference type="eggNOG" id="COG0091">
    <property type="taxonomic scope" value="Bacteria"/>
</dbReference>
<dbReference type="OMA" id="KRIQPRA"/>
<dbReference type="OrthoDB" id="9805969at2"/>
<dbReference type="GO" id="GO:0022625">
    <property type="term" value="C:cytosolic large ribosomal subunit"/>
    <property type="evidence" value="ECO:0007669"/>
    <property type="project" value="TreeGrafter"/>
</dbReference>
<dbReference type="GO" id="GO:0019843">
    <property type="term" value="F:rRNA binding"/>
    <property type="evidence" value="ECO:0007669"/>
    <property type="project" value="UniProtKB-UniRule"/>
</dbReference>
<dbReference type="GO" id="GO:0003735">
    <property type="term" value="F:structural constituent of ribosome"/>
    <property type="evidence" value="ECO:0007669"/>
    <property type="project" value="InterPro"/>
</dbReference>
<dbReference type="GO" id="GO:0006412">
    <property type="term" value="P:translation"/>
    <property type="evidence" value="ECO:0007669"/>
    <property type="project" value="UniProtKB-UniRule"/>
</dbReference>
<dbReference type="CDD" id="cd00336">
    <property type="entry name" value="Ribosomal_L22"/>
    <property type="match status" value="1"/>
</dbReference>
<dbReference type="FunFam" id="3.90.470.10:FF:000001">
    <property type="entry name" value="50S ribosomal protein L22"/>
    <property type="match status" value="1"/>
</dbReference>
<dbReference type="Gene3D" id="3.90.470.10">
    <property type="entry name" value="Ribosomal protein L22/L17"/>
    <property type="match status" value="1"/>
</dbReference>
<dbReference type="HAMAP" id="MF_01331_B">
    <property type="entry name" value="Ribosomal_uL22_B"/>
    <property type="match status" value="1"/>
</dbReference>
<dbReference type="InterPro" id="IPR001063">
    <property type="entry name" value="Ribosomal_uL22"/>
</dbReference>
<dbReference type="InterPro" id="IPR005727">
    <property type="entry name" value="Ribosomal_uL22_bac/chlpt-type"/>
</dbReference>
<dbReference type="InterPro" id="IPR047867">
    <property type="entry name" value="Ribosomal_uL22_bac/org-type"/>
</dbReference>
<dbReference type="InterPro" id="IPR018260">
    <property type="entry name" value="Ribosomal_uL22_CS"/>
</dbReference>
<dbReference type="InterPro" id="IPR036394">
    <property type="entry name" value="Ribosomal_uL22_sf"/>
</dbReference>
<dbReference type="NCBIfam" id="TIGR01044">
    <property type="entry name" value="rplV_bact"/>
    <property type="match status" value="1"/>
</dbReference>
<dbReference type="PANTHER" id="PTHR13501">
    <property type="entry name" value="CHLOROPLAST 50S RIBOSOMAL PROTEIN L22-RELATED"/>
    <property type="match status" value="1"/>
</dbReference>
<dbReference type="PANTHER" id="PTHR13501:SF8">
    <property type="entry name" value="LARGE RIBOSOMAL SUBUNIT PROTEIN UL22M"/>
    <property type="match status" value="1"/>
</dbReference>
<dbReference type="Pfam" id="PF00237">
    <property type="entry name" value="Ribosomal_L22"/>
    <property type="match status" value="1"/>
</dbReference>
<dbReference type="SUPFAM" id="SSF54843">
    <property type="entry name" value="Ribosomal protein L22"/>
    <property type="match status" value="1"/>
</dbReference>
<dbReference type="PROSITE" id="PS00464">
    <property type="entry name" value="RIBOSOMAL_L22"/>
    <property type="match status" value="1"/>
</dbReference>
<gene>
    <name evidence="1" type="primary">rplV</name>
</gene>
<accession>P0C0D3</accession>
<accession>Q7ATC1</accession>
<accession>Q9A1W9</accession>
<reference key="1">
    <citation type="journal article" date="2004" name="Ann. Clin. Microbiol. Antimicrob.">
        <title>Mutation at the position 2058 of the 23S rRNA as a cause of macrolide resistance in Streptococcus pyogenes.</title>
        <authorList>
            <person name="Jalava J.P."/>
            <person name="Vaara M."/>
            <person name="Huovinen P."/>
        </authorList>
    </citation>
    <scope>NUCLEOTIDE SEQUENCE [GENOMIC DNA]</scope>
    <source>
        <strain>ni4277</strain>
    </source>
</reference>
<evidence type="ECO:0000255" key="1">
    <source>
        <dbReference type="HAMAP-Rule" id="MF_01331"/>
    </source>
</evidence>
<evidence type="ECO:0000305" key="2"/>